<reference key="1">
    <citation type="journal article" date="2006" name="Science">
        <title>Genomic islands and the ecology and evolution of Prochlorococcus.</title>
        <authorList>
            <person name="Coleman M.L."/>
            <person name="Sullivan M.B."/>
            <person name="Martiny A.C."/>
            <person name="Steglich C."/>
            <person name="Barry K."/>
            <person name="Delong E.F."/>
            <person name="Chisholm S.W."/>
        </authorList>
    </citation>
    <scope>NUCLEOTIDE SEQUENCE [LARGE SCALE GENOMIC DNA]</scope>
    <source>
        <strain>MIT 9312</strain>
    </source>
</reference>
<sequence>MRHQLRIPLLSKPADQRKALLRGLTTQLIREGRVTTTKARAKALRNEAERMISLAKDGSLASRRRAIGYIYDKKLVHSLFEKAQERYGDRKGGYTRIVRTVSRKGDNAQMAIIELV</sequence>
<feature type="chain" id="PRO_1000055911" description="Large ribosomal subunit protein bL17">
    <location>
        <begin position="1"/>
        <end position="116"/>
    </location>
</feature>
<proteinExistence type="inferred from homology"/>
<gene>
    <name evidence="1" type="primary">rplQ</name>
    <name evidence="1" type="synonym">rpl17</name>
    <name type="ordered locus">PMT9312_1627</name>
</gene>
<protein>
    <recommendedName>
        <fullName evidence="1">Large ribosomal subunit protein bL17</fullName>
    </recommendedName>
    <alternativeName>
        <fullName evidence="2">50S ribosomal protein L17</fullName>
    </alternativeName>
</protein>
<accession>Q318K8</accession>
<dbReference type="EMBL" id="CP000111">
    <property type="protein sequence ID" value="ABB50687.1"/>
    <property type="molecule type" value="Genomic_DNA"/>
</dbReference>
<dbReference type="RefSeq" id="WP_011377169.1">
    <property type="nucleotide sequence ID" value="NC_007577.1"/>
</dbReference>
<dbReference type="SMR" id="Q318K8"/>
<dbReference type="STRING" id="74546.PMT9312_1627"/>
<dbReference type="KEGG" id="pmi:PMT9312_1627"/>
<dbReference type="eggNOG" id="COG0203">
    <property type="taxonomic scope" value="Bacteria"/>
</dbReference>
<dbReference type="HOGENOM" id="CLU_074407_2_2_3"/>
<dbReference type="OrthoDB" id="9809073at2"/>
<dbReference type="Proteomes" id="UP000002715">
    <property type="component" value="Chromosome"/>
</dbReference>
<dbReference type="GO" id="GO:0022625">
    <property type="term" value="C:cytosolic large ribosomal subunit"/>
    <property type="evidence" value="ECO:0007669"/>
    <property type="project" value="TreeGrafter"/>
</dbReference>
<dbReference type="GO" id="GO:0003735">
    <property type="term" value="F:structural constituent of ribosome"/>
    <property type="evidence" value="ECO:0007669"/>
    <property type="project" value="InterPro"/>
</dbReference>
<dbReference type="GO" id="GO:0006412">
    <property type="term" value="P:translation"/>
    <property type="evidence" value="ECO:0007669"/>
    <property type="project" value="UniProtKB-UniRule"/>
</dbReference>
<dbReference type="FunFam" id="3.90.1030.10:FF:000001">
    <property type="entry name" value="50S ribosomal protein L17"/>
    <property type="match status" value="1"/>
</dbReference>
<dbReference type="Gene3D" id="3.90.1030.10">
    <property type="entry name" value="Ribosomal protein L17"/>
    <property type="match status" value="1"/>
</dbReference>
<dbReference type="HAMAP" id="MF_01368">
    <property type="entry name" value="Ribosomal_bL17"/>
    <property type="match status" value="1"/>
</dbReference>
<dbReference type="InterPro" id="IPR000456">
    <property type="entry name" value="Ribosomal_bL17"/>
</dbReference>
<dbReference type="InterPro" id="IPR036373">
    <property type="entry name" value="Ribosomal_bL17_sf"/>
</dbReference>
<dbReference type="NCBIfam" id="TIGR00059">
    <property type="entry name" value="L17"/>
    <property type="match status" value="1"/>
</dbReference>
<dbReference type="PANTHER" id="PTHR14413:SF16">
    <property type="entry name" value="LARGE RIBOSOMAL SUBUNIT PROTEIN BL17M"/>
    <property type="match status" value="1"/>
</dbReference>
<dbReference type="PANTHER" id="PTHR14413">
    <property type="entry name" value="RIBOSOMAL PROTEIN L17"/>
    <property type="match status" value="1"/>
</dbReference>
<dbReference type="Pfam" id="PF01196">
    <property type="entry name" value="Ribosomal_L17"/>
    <property type="match status" value="1"/>
</dbReference>
<dbReference type="SUPFAM" id="SSF64263">
    <property type="entry name" value="Prokaryotic ribosomal protein L17"/>
    <property type="match status" value="1"/>
</dbReference>
<name>RL17_PROM9</name>
<organism>
    <name type="scientific">Prochlorococcus marinus (strain MIT 9312)</name>
    <dbReference type="NCBI Taxonomy" id="74546"/>
    <lineage>
        <taxon>Bacteria</taxon>
        <taxon>Bacillati</taxon>
        <taxon>Cyanobacteriota</taxon>
        <taxon>Cyanophyceae</taxon>
        <taxon>Synechococcales</taxon>
        <taxon>Prochlorococcaceae</taxon>
        <taxon>Prochlorococcus</taxon>
    </lineage>
</organism>
<comment type="subunit">
    <text evidence="1">Part of the 50S ribosomal subunit. Contacts protein L32.</text>
</comment>
<comment type="similarity">
    <text evidence="1">Belongs to the bacterial ribosomal protein bL17 family.</text>
</comment>
<evidence type="ECO:0000255" key="1">
    <source>
        <dbReference type="HAMAP-Rule" id="MF_01368"/>
    </source>
</evidence>
<evidence type="ECO:0000305" key="2"/>
<keyword id="KW-0687">Ribonucleoprotein</keyword>
<keyword id="KW-0689">Ribosomal protein</keyword>